<gene>
    <name evidence="2" type="primary">mutM</name>
    <name evidence="2" type="synonym">fpg</name>
    <name type="ordered locus">LHK_00316</name>
</gene>
<evidence type="ECO:0000250" key="1"/>
<evidence type="ECO:0000255" key="2">
    <source>
        <dbReference type="HAMAP-Rule" id="MF_00103"/>
    </source>
</evidence>
<comment type="function">
    <text evidence="2">Involved in base excision repair of DNA damaged by oxidation or by mutagenic agents. Acts as a DNA glycosylase that recognizes and removes damaged bases. Has a preference for oxidized purines, such as 7,8-dihydro-8-oxoguanine (8-oxoG). Has AP (apurinic/apyrimidinic) lyase activity and introduces nicks in the DNA strand. Cleaves the DNA backbone by beta-delta elimination to generate a single-strand break at the site of the removed base with both 3'- and 5'-phosphates.</text>
</comment>
<comment type="catalytic activity">
    <reaction evidence="2">
        <text>Hydrolysis of DNA containing ring-opened 7-methylguanine residues, releasing 2,6-diamino-4-hydroxy-5-(N-methyl)formamidopyrimidine.</text>
        <dbReference type="EC" id="3.2.2.23"/>
    </reaction>
</comment>
<comment type="catalytic activity">
    <reaction evidence="2">
        <text>2'-deoxyribonucleotide-(2'-deoxyribose 5'-phosphate)-2'-deoxyribonucleotide-DNA = a 3'-end 2'-deoxyribonucleotide-(2,3-dehydro-2,3-deoxyribose 5'-phosphate)-DNA + a 5'-end 5'-phospho-2'-deoxyribonucleoside-DNA + H(+)</text>
        <dbReference type="Rhea" id="RHEA:66592"/>
        <dbReference type="Rhea" id="RHEA-COMP:13180"/>
        <dbReference type="Rhea" id="RHEA-COMP:16897"/>
        <dbReference type="Rhea" id="RHEA-COMP:17067"/>
        <dbReference type="ChEBI" id="CHEBI:15378"/>
        <dbReference type="ChEBI" id="CHEBI:136412"/>
        <dbReference type="ChEBI" id="CHEBI:157695"/>
        <dbReference type="ChEBI" id="CHEBI:167181"/>
        <dbReference type="EC" id="4.2.99.18"/>
    </reaction>
</comment>
<comment type="cofactor">
    <cofactor evidence="2">
        <name>Zn(2+)</name>
        <dbReference type="ChEBI" id="CHEBI:29105"/>
    </cofactor>
    <text evidence="2">Binds 1 zinc ion per subunit.</text>
</comment>
<comment type="subunit">
    <text evidence="2">Monomer.</text>
</comment>
<comment type="similarity">
    <text evidence="2">Belongs to the FPG family.</text>
</comment>
<proteinExistence type="inferred from homology"/>
<keyword id="KW-0227">DNA damage</keyword>
<keyword id="KW-0234">DNA repair</keyword>
<keyword id="KW-0238">DNA-binding</keyword>
<keyword id="KW-0326">Glycosidase</keyword>
<keyword id="KW-0378">Hydrolase</keyword>
<keyword id="KW-0456">Lyase</keyword>
<keyword id="KW-0479">Metal-binding</keyword>
<keyword id="KW-0511">Multifunctional enzyme</keyword>
<keyword id="KW-1185">Reference proteome</keyword>
<keyword id="KW-0862">Zinc</keyword>
<keyword id="KW-0863">Zinc-finger</keyword>
<dbReference type="EC" id="3.2.2.23" evidence="2"/>
<dbReference type="EC" id="4.2.99.18" evidence="2"/>
<dbReference type="EMBL" id="CP001154">
    <property type="protein sequence ID" value="ACO73311.1"/>
    <property type="molecule type" value="Genomic_DNA"/>
</dbReference>
<dbReference type="RefSeq" id="WP_012695805.1">
    <property type="nucleotide sequence ID" value="NC_012559.1"/>
</dbReference>
<dbReference type="SMR" id="C1DBB4"/>
<dbReference type="STRING" id="557598.LHK_00316"/>
<dbReference type="GeneID" id="75109450"/>
<dbReference type="KEGG" id="lhk:LHK_00316"/>
<dbReference type="eggNOG" id="COG0266">
    <property type="taxonomic scope" value="Bacteria"/>
</dbReference>
<dbReference type="HOGENOM" id="CLU_038423_1_1_4"/>
<dbReference type="Proteomes" id="UP000002010">
    <property type="component" value="Chromosome"/>
</dbReference>
<dbReference type="GO" id="GO:0034039">
    <property type="term" value="F:8-oxo-7,8-dihydroguanine DNA N-glycosylase activity"/>
    <property type="evidence" value="ECO:0007669"/>
    <property type="project" value="TreeGrafter"/>
</dbReference>
<dbReference type="GO" id="GO:0140078">
    <property type="term" value="F:class I DNA-(apurinic or apyrimidinic site) endonuclease activity"/>
    <property type="evidence" value="ECO:0007669"/>
    <property type="project" value="UniProtKB-EC"/>
</dbReference>
<dbReference type="GO" id="GO:0003684">
    <property type="term" value="F:damaged DNA binding"/>
    <property type="evidence" value="ECO:0007669"/>
    <property type="project" value="InterPro"/>
</dbReference>
<dbReference type="GO" id="GO:0008270">
    <property type="term" value="F:zinc ion binding"/>
    <property type="evidence" value="ECO:0007669"/>
    <property type="project" value="UniProtKB-UniRule"/>
</dbReference>
<dbReference type="GO" id="GO:0006284">
    <property type="term" value="P:base-excision repair"/>
    <property type="evidence" value="ECO:0007669"/>
    <property type="project" value="InterPro"/>
</dbReference>
<dbReference type="CDD" id="cd08966">
    <property type="entry name" value="EcFpg-like_N"/>
    <property type="match status" value="1"/>
</dbReference>
<dbReference type="FunFam" id="1.10.8.50:FF:000003">
    <property type="entry name" value="Formamidopyrimidine-DNA glycosylase"/>
    <property type="match status" value="1"/>
</dbReference>
<dbReference type="FunFam" id="3.20.190.10:FF:000001">
    <property type="entry name" value="Formamidopyrimidine-DNA glycosylase"/>
    <property type="match status" value="1"/>
</dbReference>
<dbReference type="Gene3D" id="1.10.8.50">
    <property type="match status" value="1"/>
</dbReference>
<dbReference type="Gene3D" id="3.20.190.10">
    <property type="entry name" value="MutM-like, N-terminal"/>
    <property type="match status" value="1"/>
</dbReference>
<dbReference type="HAMAP" id="MF_00103">
    <property type="entry name" value="Fapy_DNA_glycosyl"/>
    <property type="match status" value="1"/>
</dbReference>
<dbReference type="InterPro" id="IPR015886">
    <property type="entry name" value="DNA_glyclase/AP_lyase_DNA-bd"/>
</dbReference>
<dbReference type="InterPro" id="IPR015887">
    <property type="entry name" value="DNA_glyclase_Znf_dom_DNA_BS"/>
</dbReference>
<dbReference type="InterPro" id="IPR020629">
    <property type="entry name" value="Formamido-pyr_DNA_Glyclase"/>
</dbReference>
<dbReference type="InterPro" id="IPR012319">
    <property type="entry name" value="FPG_cat"/>
</dbReference>
<dbReference type="InterPro" id="IPR035937">
    <property type="entry name" value="MutM-like_N-ter"/>
</dbReference>
<dbReference type="InterPro" id="IPR010979">
    <property type="entry name" value="Ribosomal_uS13-like_H2TH"/>
</dbReference>
<dbReference type="InterPro" id="IPR000214">
    <property type="entry name" value="Znf_DNA_glyclase/AP_lyase"/>
</dbReference>
<dbReference type="InterPro" id="IPR010663">
    <property type="entry name" value="Znf_FPG/IleRS"/>
</dbReference>
<dbReference type="NCBIfam" id="TIGR00577">
    <property type="entry name" value="fpg"/>
    <property type="match status" value="1"/>
</dbReference>
<dbReference type="NCBIfam" id="NF002211">
    <property type="entry name" value="PRK01103.1"/>
    <property type="match status" value="1"/>
</dbReference>
<dbReference type="PANTHER" id="PTHR22993">
    <property type="entry name" value="FORMAMIDOPYRIMIDINE-DNA GLYCOSYLASE"/>
    <property type="match status" value="1"/>
</dbReference>
<dbReference type="PANTHER" id="PTHR22993:SF9">
    <property type="entry name" value="FORMAMIDOPYRIMIDINE-DNA GLYCOSYLASE"/>
    <property type="match status" value="1"/>
</dbReference>
<dbReference type="Pfam" id="PF01149">
    <property type="entry name" value="Fapy_DNA_glyco"/>
    <property type="match status" value="1"/>
</dbReference>
<dbReference type="Pfam" id="PF06831">
    <property type="entry name" value="H2TH"/>
    <property type="match status" value="1"/>
</dbReference>
<dbReference type="Pfam" id="PF06827">
    <property type="entry name" value="zf-FPG_IleRS"/>
    <property type="match status" value="1"/>
</dbReference>
<dbReference type="SMART" id="SM00898">
    <property type="entry name" value="Fapy_DNA_glyco"/>
    <property type="match status" value="1"/>
</dbReference>
<dbReference type="SMART" id="SM01232">
    <property type="entry name" value="H2TH"/>
    <property type="match status" value="1"/>
</dbReference>
<dbReference type="SUPFAM" id="SSF57716">
    <property type="entry name" value="Glucocorticoid receptor-like (DNA-binding domain)"/>
    <property type="match status" value="1"/>
</dbReference>
<dbReference type="SUPFAM" id="SSF81624">
    <property type="entry name" value="N-terminal domain of MutM-like DNA repair proteins"/>
    <property type="match status" value="1"/>
</dbReference>
<dbReference type="SUPFAM" id="SSF46946">
    <property type="entry name" value="S13-like H2TH domain"/>
    <property type="match status" value="1"/>
</dbReference>
<dbReference type="PROSITE" id="PS51068">
    <property type="entry name" value="FPG_CAT"/>
    <property type="match status" value="1"/>
</dbReference>
<dbReference type="PROSITE" id="PS01242">
    <property type="entry name" value="ZF_FPG_1"/>
    <property type="match status" value="1"/>
</dbReference>
<dbReference type="PROSITE" id="PS51066">
    <property type="entry name" value="ZF_FPG_2"/>
    <property type="match status" value="1"/>
</dbReference>
<protein>
    <recommendedName>
        <fullName evidence="2">Formamidopyrimidine-DNA glycosylase</fullName>
        <shortName evidence="2">Fapy-DNA glycosylase</shortName>
        <ecNumber evidence="2">3.2.2.23</ecNumber>
    </recommendedName>
    <alternativeName>
        <fullName evidence="2">DNA-(apurinic or apyrimidinic site) lyase MutM</fullName>
        <shortName evidence="2">AP lyase MutM</shortName>
        <ecNumber evidence="2">4.2.99.18</ecNumber>
    </alternativeName>
</protein>
<accession>C1DBB4</accession>
<feature type="initiator methionine" description="Removed" evidence="1">
    <location>
        <position position="1"/>
    </location>
</feature>
<feature type="chain" id="PRO_1000118892" description="Formamidopyrimidine-DNA glycosylase">
    <location>
        <begin position="2"/>
        <end position="272"/>
    </location>
</feature>
<feature type="zinc finger region" description="FPG-type" evidence="2">
    <location>
        <begin position="238"/>
        <end position="272"/>
    </location>
</feature>
<feature type="active site" description="Schiff-base intermediate with DNA" evidence="2">
    <location>
        <position position="2"/>
    </location>
</feature>
<feature type="active site" description="Proton donor" evidence="2">
    <location>
        <position position="3"/>
    </location>
</feature>
<feature type="active site" description="Proton donor; for beta-elimination activity" evidence="2">
    <location>
        <position position="58"/>
    </location>
</feature>
<feature type="active site" description="Proton donor; for delta-elimination activity" evidence="2">
    <location>
        <position position="262"/>
    </location>
</feature>
<feature type="binding site" evidence="2">
    <location>
        <position position="92"/>
    </location>
    <ligand>
        <name>DNA</name>
        <dbReference type="ChEBI" id="CHEBI:16991"/>
    </ligand>
</feature>
<feature type="binding site" evidence="2">
    <location>
        <position position="111"/>
    </location>
    <ligand>
        <name>DNA</name>
        <dbReference type="ChEBI" id="CHEBI:16991"/>
    </ligand>
</feature>
<feature type="binding site" evidence="2">
    <location>
        <position position="153"/>
    </location>
    <ligand>
        <name>DNA</name>
        <dbReference type="ChEBI" id="CHEBI:16991"/>
    </ligand>
</feature>
<sequence>MPELPEVETVRAGLTPHLTGRQIKAVTVREPRLRWPVDPDLSAKLAGLEVRTVERRAKYLLIGFGHEQWLIVHLGMSGSVRVLPDDTPPQKHDHLDFILDDGHLVRYHDPRRFGAVLWHLGPPDSHPLLSRLGPEPLSDGFDATGLLHALAGRRQALKVALMDNAVVVGVGNIYANESLFEAGLDPRRPALSLTADEAGQLVQSVRHTLARAIAAGGSTLRDFRDAIGKPGYFQQDYAVYGRQGQSCPRCGGLVERCRLGQRSTFFCPACQR</sequence>
<reference key="1">
    <citation type="journal article" date="2009" name="PLoS Genet.">
        <title>The complete genome and proteome of Laribacter hongkongensis reveal potential mechanisms for adaptations to different temperatures and habitats.</title>
        <authorList>
            <person name="Woo P.C.Y."/>
            <person name="Lau S.K.P."/>
            <person name="Tse H."/>
            <person name="Teng J.L.L."/>
            <person name="Curreem S.O."/>
            <person name="Tsang A.K.L."/>
            <person name="Fan R.Y.Y."/>
            <person name="Wong G.K.M."/>
            <person name="Huang Y."/>
            <person name="Loman N.J."/>
            <person name="Snyder L.A.S."/>
            <person name="Cai J.J."/>
            <person name="Huang J.-D."/>
            <person name="Mak W."/>
            <person name="Pallen M.J."/>
            <person name="Lok S."/>
            <person name="Yuen K.-Y."/>
        </authorList>
    </citation>
    <scope>NUCLEOTIDE SEQUENCE [LARGE SCALE GENOMIC DNA]</scope>
    <source>
        <strain>HLHK9</strain>
    </source>
</reference>
<organism>
    <name type="scientific">Laribacter hongkongensis (strain HLHK9)</name>
    <dbReference type="NCBI Taxonomy" id="557598"/>
    <lineage>
        <taxon>Bacteria</taxon>
        <taxon>Pseudomonadati</taxon>
        <taxon>Pseudomonadota</taxon>
        <taxon>Betaproteobacteria</taxon>
        <taxon>Neisseriales</taxon>
        <taxon>Aquaspirillaceae</taxon>
        <taxon>Laribacter</taxon>
    </lineage>
</organism>
<name>FPG_LARHH</name>